<feature type="chain" id="PRO_0000224676" description="UDP-N-acetylenolpyruvoylglucosamine reductase">
    <location>
        <begin position="1"/>
        <end position="296"/>
    </location>
</feature>
<feature type="domain" description="FAD-binding PCMH-type" evidence="1">
    <location>
        <begin position="26"/>
        <end position="191"/>
    </location>
</feature>
<feature type="active site" evidence="1">
    <location>
        <position position="170"/>
    </location>
</feature>
<feature type="active site" description="Proton donor" evidence="1">
    <location>
        <position position="218"/>
    </location>
</feature>
<feature type="active site" evidence="1">
    <location>
        <position position="287"/>
    </location>
</feature>
<protein>
    <recommendedName>
        <fullName evidence="1">UDP-N-acetylenolpyruvoylglucosamine reductase</fullName>
        <ecNumber evidence="1">1.3.1.98</ecNumber>
    </recommendedName>
    <alternativeName>
        <fullName evidence="1">UDP-N-acetylmuramate dehydrogenase</fullName>
    </alternativeName>
</protein>
<proteinExistence type="inferred from homology"/>
<gene>
    <name evidence="1" type="primary">murB</name>
    <name type="ordered locus">CAB741</name>
</gene>
<dbReference type="EC" id="1.3.1.98" evidence="1"/>
<dbReference type="EMBL" id="CR848038">
    <property type="protein sequence ID" value="CAH64188.1"/>
    <property type="molecule type" value="Genomic_DNA"/>
</dbReference>
<dbReference type="RefSeq" id="WP_011097307.1">
    <property type="nucleotide sequence ID" value="NC_004552.2"/>
</dbReference>
<dbReference type="SMR" id="Q5L5A3"/>
<dbReference type="KEGG" id="cab:CAB741"/>
<dbReference type="eggNOG" id="COG0812">
    <property type="taxonomic scope" value="Bacteria"/>
</dbReference>
<dbReference type="HOGENOM" id="CLU_035304_1_1_0"/>
<dbReference type="OrthoDB" id="9804753at2"/>
<dbReference type="UniPathway" id="UPA00219"/>
<dbReference type="Proteomes" id="UP000001012">
    <property type="component" value="Chromosome"/>
</dbReference>
<dbReference type="GO" id="GO:0005829">
    <property type="term" value="C:cytosol"/>
    <property type="evidence" value="ECO:0007669"/>
    <property type="project" value="TreeGrafter"/>
</dbReference>
<dbReference type="GO" id="GO:0071949">
    <property type="term" value="F:FAD binding"/>
    <property type="evidence" value="ECO:0007669"/>
    <property type="project" value="InterPro"/>
</dbReference>
<dbReference type="GO" id="GO:0008762">
    <property type="term" value="F:UDP-N-acetylmuramate dehydrogenase activity"/>
    <property type="evidence" value="ECO:0007669"/>
    <property type="project" value="UniProtKB-UniRule"/>
</dbReference>
<dbReference type="GO" id="GO:0051301">
    <property type="term" value="P:cell division"/>
    <property type="evidence" value="ECO:0007669"/>
    <property type="project" value="UniProtKB-KW"/>
</dbReference>
<dbReference type="GO" id="GO:0071555">
    <property type="term" value="P:cell wall organization"/>
    <property type="evidence" value="ECO:0007669"/>
    <property type="project" value="UniProtKB-KW"/>
</dbReference>
<dbReference type="GO" id="GO:0009252">
    <property type="term" value="P:peptidoglycan biosynthetic process"/>
    <property type="evidence" value="ECO:0007669"/>
    <property type="project" value="UniProtKB-UniRule"/>
</dbReference>
<dbReference type="GO" id="GO:0008360">
    <property type="term" value="P:regulation of cell shape"/>
    <property type="evidence" value="ECO:0007669"/>
    <property type="project" value="UniProtKB-KW"/>
</dbReference>
<dbReference type="Gene3D" id="3.30.465.10">
    <property type="match status" value="1"/>
</dbReference>
<dbReference type="Gene3D" id="3.90.78.10">
    <property type="entry name" value="UDP-N-acetylenolpyruvoylglucosamine reductase, C-terminal domain"/>
    <property type="match status" value="1"/>
</dbReference>
<dbReference type="Gene3D" id="3.30.43.10">
    <property type="entry name" value="Uridine Diphospho-n-acetylenolpyruvylglucosamine Reductase, domain 2"/>
    <property type="match status" value="1"/>
</dbReference>
<dbReference type="HAMAP" id="MF_00037">
    <property type="entry name" value="MurB"/>
    <property type="match status" value="1"/>
</dbReference>
<dbReference type="InterPro" id="IPR016166">
    <property type="entry name" value="FAD-bd_PCMH"/>
</dbReference>
<dbReference type="InterPro" id="IPR036318">
    <property type="entry name" value="FAD-bd_PCMH-like_sf"/>
</dbReference>
<dbReference type="InterPro" id="IPR016167">
    <property type="entry name" value="FAD-bd_PCMH_sub1"/>
</dbReference>
<dbReference type="InterPro" id="IPR016169">
    <property type="entry name" value="FAD-bd_PCMH_sub2"/>
</dbReference>
<dbReference type="InterPro" id="IPR003170">
    <property type="entry name" value="MurB"/>
</dbReference>
<dbReference type="InterPro" id="IPR011601">
    <property type="entry name" value="MurB_C"/>
</dbReference>
<dbReference type="InterPro" id="IPR036635">
    <property type="entry name" value="MurB_C_sf"/>
</dbReference>
<dbReference type="InterPro" id="IPR006094">
    <property type="entry name" value="Oxid_FAD_bind_N"/>
</dbReference>
<dbReference type="NCBIfam" id="TIGR00179">
    <property type="entry name" value="murB"/>
    <property type="match status" value="1"/>
</dbReference>
<dbReference type="NCBIfam" id="NF010480">
    <property type="entry name" value="PRK13905.1"/>
    <property type="match status" value="1"/>
</dbReference>
<dbReference type="PANTHER" id="PTHR21071">
    <property type="entry name" value="UDP-N-ACETYLENOLPYRUVOYLGLUCOSAMINE REDUCTASE"/>
    <property type="match status" value="1"/>
</dbReference>
<dbReference type="PANTHER" id="PTHR21071:SF4">
    <property type="entry name" value="UDP-N-ACETYLENOLPYRUVOYLGLUCOSAMINE REDUCTASE"/>
    <property type="match status" value="1"/>
</dbReference>
<dbReference type="Pfam" id="PF01565">
    <property type="entry name" value="FAD_binding_4"/>
    <property type="match status" value="1"/>
</dbReference>
<dbReference type="Pfam" id="PF02873">
    <property type="entry name" value="MurB_C"/>
    <property type="match status" value="1"/>
</dbReference>
<dbReference type="SUPFAM" id="SSF56176">
    <property type="entry name" value="FAD-binding/transporter-associated domain-like"/>
    <property type="match status" value="1"/>
</dbReference>
<dbReference type="SUPFAM" id="SSF56194">
    <property type="entry name" value="Uridine diphospho-N-Acetylenolpyruvylglucosamine reductase, MurB, C-terminal domain"/>
    <property type="match status" value="1"/>
</dbReference>
<dbReference type="PROSITE" id="PS51387">
    <property type="entry name" value="FAD_PCMH"/>
    <property type="match status" value="1"/>
</dbReference>
<reference key="1">
    <citation type="journal article" date="2005" name="Genome Res.">
        <title>The Chlamydophila abortus genome sequence reveals an array of variable proteins that contribute to interspecies variation.</title>
        <authorList>
            <person name="Thomson N.R."/>
            <person name="Yeats C."/>
            <person name="Bell K."/>
            <person name="Holden M.T.G."/>
            <person name="Bentley S.D."/>
            <person name="Livingstone M."/>
            <person name="Cerdeno-Tarraga A.-M."/>
            <person name="Harris B."/>
            <person name="Doggett J."/>
            <person name="Ormond D."/>
            <person name="Mungall K."/>
            <person name="Clarke K."/>
            <person name="Feltwell T."/>
            <person name="Hance Z."/>
            <person name="Sanders M."/>
            <person name="Quail M.A."/>
            <person name="Price C."/>
            <person name="Barrell B.G."/>
            <person name="Parkhill J."/>
            <person name="Longbottom D."/>
        </authorList>
    </citation>
    <scope>NUCLEOTIDE SEQUENCE [LARGE SCALE GENOMIC DNA]</scope>
    <source>
        <strain>DSM 27085 / S26/3</strain>
    </source>
</reference>
<comment type="function">
    <text evidence="1">Cell wall formation.</text>
</comment>
<comment type="catalytic activity">
    <reaction evidence="1">
        <text>UDP-N-acetyl-alpha-D-muramate + NADP(+) = UDP-N-acetyl-3-O-(1-carboxyvinyl)-alpha-D-glucosamine + NADPH + H(+)</text>
        <dbReference type="Rhea" id="RHEA:12248"/>
        <dbReference type="ChEBI" id="CHEBI:15378"/>
        <dbReference type="ChEBI" id="CHEBI:57783"/>
        <dbReference type="ChEBI" id="CHEBI:58349"/>
        <dbReference type="ChEBI" id="CHEBI:68483"/>
        <dbReference type="ChEBI" id="CHEBI:70757"/>
        <dbReference type="EC" id="1.3.1.98"/>
    </reaction>
</comment>
<comment type="cofactor">
    <cofactor evidence="1">
        <name>FAD</name>
        <dbReference type="ChEBI" id="CHEBI:57692"/>
    </cofactor>
</comment>
<comment type="pathway">
    <text evidence="1">Cell wall biogenesis; peptidoglycan biosynthesis.</text>
</comment>
<comment type="subcellular location">
    <subcellularLocation>
        <location evidence="1">Cytoplasm</location>
    </subcellularLocation>
</comment>
<comment type="similarity">
    <text evidence="1">Belongs to the MurB family.</text>
</comment>
<accession>Q5L5A3</accession>
<sequence>MKASTVIRFPFSVRRSVWLNKYSTFRIGGPANYFKVVHSASEAQQVIQFLHSHNYPFIIVGKGSNCLFDDRGFDGFVLCNGIQGKEFVSETTIKVYSGTSFSFLGKTLSSSGYSGLEFAVGIPGSVGGAVFMNAGIGNQDTAAVIESVEVINSKGEILSYNTEELGFGYRTSRFQHCNEFILSATFRLSRNSSSVKIAKDLLRNRLLSQPYQQPSTGCIFRNPPGNSAGKLIDEAGLKGFSLGGAQISPKHANFIVNTGRATSQEVKQLIQIVQDKLKSQGINLEEEVRIIPYQLP</sequence>
<keyword id="KW-0131">Cell cycle</keyword>
<keyword id="KW-0132">Cell division</keyword>
<keyword id="KW-0133">Cell shape</keyword>
<keyword id="KW-0961">Cell wall biogenesis/degradation</keyword>
<keyword id="KW-0963">Cytoplasm</keyword>
<keyword id="KW-0274">FAD</keyword>
<keyword id="KW-0285">Flavoprotein</keyword>
<keyword id="KW-0521">NADP</keyword>
<keyword id="KW-0560">Oxidoreductase</keyword>
<keyword id="KW-0573">Peptidoglycan synthesis</keyword>
<organism>
    <name type="scientific">Chlamydia abortus (strain DSM 27085 / S26/3)</name>
    <name type="common">Chlamydophila abortus</name>
    <dbReference type="NCBI Taxonomy" id="218497"/>
    <lineage>
        <taxon>Bacteria</taxon>
        <taxon>Pseudomonadati</taxon>
        <taxon>Chlamydiota</taxon>
        <taxon>Chlamydiia</taxon>
        <taxon>Chlamydiales</taxon>
        <taxon>Chlamydiaceae</taxon>
        <taxon>Chlamydia/Chlamydophila group</taxon>
        <taxon>Chlamydia</taxon>
    </lineage>
</organism>
<evidence type="ECO:0000255" key="1">
    <source>
        <dbReference type="HAMAP-Rule" id="MF_00037"/>
    </source>
</evidence>
<name>MURB_CHLAB</name>